<accession>Q8DIM4</accession>
<keyword id="KW-0665">Pyrimidine biosynthesis</keyword>
<keyword id="KW-1185">Reference proteome</keyword>
<keyword id="KW-0808">Transferase</keyword>
<dbReference type="EC" id="2.1.3.2" evidence="1"/>
<dbReference type="EMBL" id="BA000039">
    <property type="protein sequence ID" value="BAC09110.1"/>
    <property type="molecule type" value="Genomic_DNA"/>
</dbReference>
<dbReference type="RefSeq" id="NP_682348.1">
    <property type="nucleotide sequence ID" value="NC_004113.1"/>
</dbReference>
<dbReference type="RefSeq" id="WP_011057398.1">
    <property type="nucleotide sequence ID" value="NC_004113.1"/>
</dbReference>
<dbReference type="SMR" id="Q8DIM4"/>
<dbReference type="STRING" id="197221.gene:10748160"/>
<dbReference type="EnsemblBacteria" id="BAC09110">
    <property type="protein sequence ID" value="BAC09110"/>
    <property type="gene ID" value="BAC09110"/>
</dbReference>
<dbReference type="KEGG" id="tel:tll1558"/>
<dbReference type="PATRIC" id="fig|197221.4.peg.1634"/>
<dbReference type="eggNOG" id="COG0540">
    <property type="taxonomic scope" value="Bacteria"/>
</dbReference>
<dbReference type="UniPathway" id="UPA00070">
    <property type="reaction ID" value="UER00116"/>
</dbReference>
<dbReference type="Proteomes" id="UP000000440">
    <property type="component" value="Chromosome"/>
</dbReference>
<dbReference type="GO" id="GO:0005829">
    <property type="term" value="C:cytosol"/>
    <property type="evidence" value="ECO:0007669"/>
    <property type="project" value="TreeGrafter"/>
</dbReference>
<dbReference type="GO" id="GO:0016597">
    <property type="term" value="F:amino acid binding"/>
    <property type="evidence" value="ECO:0007669"/>
    <property type="project" value="InterPro"/>
</dbReference>
<dbReference type="GO" id="GO:0004070">
    <property type="term" value="F:aspartate carbamoyltransferase activity"/>
    <property type="evidence" value="ECO:0007669"/>
    <property type="project" value="UniProtKB-UniRule"/>
</dbReference>
<dbReference type="GO" id="GO:0006207">
    <property type="term" value="P:'de novo' pyrimidine nucleobase biosynthetic process"/>
    <property type="evidence" value="ECO:0007669"/>
    <property type="project" value="InterPro"/>
</dbReference>
<dbReference type="GO" id="GO:0044205">
    <property type="term" value="P:'de novo' UMP biosynthetic process"/>
    <property type="evidence" value="ECO:0007669"/>
    <property type="project" value="UniProtKB-UniRule"/>
</dbReference>
<dbReference type="GO" id="GO:0006520">
    <property type="term" value="P:amino acid metabolic process"/>
    <property type="evidence" value="ECO:0007669"/>
    <property type="project" value="InterPro"/>
</dbReference>
<dbReference type="Gene3D" id="3.40.50.1370">
    <property type="entry name" value="Aspartate/ornithine carbamoyltransferase"/>
    <property type="match status" value="2"/>
</dbReference>
<dbReference type="HAMAP" id="MF_00001">
    <property type="entry name" value="Asp_carb_tr"/>
    <property type="match status" value="1"/>
</dbReference>
<dbReference type="InterPro" id="IPR006132">
    <property type="entry name" value="Asp/Orn_carbamoyltranf_P-bd"/>
</dbReference>
<dbReference type="InterPro" id="IPR006130">
    <property type="entry name" value="Asp/Orn_carbamoylTrfase"/>
</dbReference>
<dbReference type="InterPro" id="IPR036901">
    <property type="entry name" value="Asp/Orn_carbamoylTrfase_sf"/>
</dbReference>
<dbReference type="InterPro" id="IPR002082">
    <property type="entry name" value="Asp_carbamoyltransf"/>
</dbReference>
<dbReference type="InterPro" id="IPR006131">
    <property type="entry name" value="Asp_carbamoyltransf_Asp/Orn-bd"/>
</dbReference>
<dbReference type="NCBIfam" id="TIGR00670">
    <property type="entry name" value="asp_carb_tr"/>
    <property type="match status" value="1"/>
</dbReference>
<dbReference type="NCBIfam" id="NF002032">
    <property type="entry name" value="PRK00856.1"/>
    <property type="match status" value="1"/>
</dbReference>
<dbReference type="PANTHER" id="PTHR45753:SF6">
    <property type="entry name" value="ASPARTATE CARBAMOYLTRANSFERASE"/>
    <property type="match status" value="1"/>
</dbReference>
<dbReference type="PANTHER" id="PTHR45753">
    <property type="entry name" value="ORNITHINE CARBAMOYLTRANSFERASE, MITOCHONDRIAL"/>
    <property type="match status" value="1"/>
</dbReference>
<dbReference type="Pfam" id="PF00185">
    <property type="entry name" value="OTCace"/>
    <property type="match status" value="1"/>
</dbReference>
<dbReference type="Pfam" id="PF02729">
    <property type="entry name" value="OTCace_N"/>
    <property type="match status" value="1"/>
</dbReference>
<dbReference type="PRINTS" id="PR00100">
    <property type="entry name" value="AOTCASE"/>
</dbReference>
<dbReference type="PRINTS" id="PR00101">
    <property type="entry name" value="ATCASE"/>
</dbReference>
<dbReference type="SUPFAM" id="SSF53671">
    <property type="entry name" value="Aspartate/ornithine carbamoyltransferase"/>
    <property type="match status" value="1"/>
</dbReference>
<dbReference type="PROSITE" id="PS00097">
    <property type="entry name" value="CARBAMOYLTRANSFERASE"/>
    <property type="match status" value="1"/>
</dbReference>
<feature type="chain" id="PRO_0000113215" description="Aspartate carbamoyltransferase catalytic subunit">
    <location>
        <begin position="1"/>
        <end position="331"/>
    </location>
</feature>
<feature type="binding site" evidence="1">
    <location>
        <position position="66"/>
    </location>
    <ligand>
        <name>carbamoyl phosphate</name>
        <dbReference type="ChEBI" id="CHEBI:58228"/>
    </ligand>
</feature>
<feature type="binding site" evidence="1">
    <location>
        <position position="67"/>
    </location>
    <ligand>
        <name>carbamoyl phosphate</name>
        <dbReference type="ChEBI" id="CHEBI:58228"/>
    </ligand>
</feature>
<feature type="binding site" evidence="1">
    <location>
        <position position="94"/>
    </location>
    <ligand>
        <name>L-aspartate</name>
        <dbReference type="ChEBI" id="CHEBI:29991"/>
    </ligand>
</feature>
<feature type="binding site" evidence="1">
    <location>
        <position position="116"/>
    </location>
    <ligand>
        <name>carbamoyl phosphate</name>
        <dbReference type="ChEBI" id="CHEBI:58228"/>
    </ligand>
</feature>
<feature type="binding site" evidence="1">
    <location>
        <position position="149"/>
    </location>
    <ligand>
        <name>carbamoyl phosphate</name>
        <dbReference type="ChEBI" id="CHEBI:58228"/>
    </ligand>
</feature>
<feature type="binding site" evidence="1">
    <location>
        <position position="152"/>
    </location>
    <ligand>
        <name>carbamoyl phosphate</name>
        <dbReference type="ChEBI" id="CHEBI:58228"/>
    </ligand>
</feature>
<feature type="binding site" evidence="1">
    <location>
        <position position="189"/>
    </location>
    <ligand>
        <name>L-aspartate</name>
        <dbReference type="ChEBI" id="CHEBI:29991"/>
    </ligand>
</feature>
<feature type="binding site" evidence="1">
    <location>
        <position position="243"/>
    </location>
    <ligand>
        <name>L-aspartate</name>
        <dbReference type="ChEBI" id="CHEBI:29991"/>
    </ligand>
</feature>
<feature type="binding site" evidence="1">
    <location>
        <position position="284"/>
    </location>
    <ligand>
        <name>carbamoyl phosphate</name>
        <dbReference type="ChEBI" id="CHEBI:58228"/>
    </ligand>
</feature>
<feature type="binding site" evidence="1">
    <location>
        <position position="285"/>
    </location>
    <ligand>
        <name>carbamoyl phosphate</name>
        <dbReference type="ChEBI" id="CHEBI:58228"/>
    </ligand>
</feature>
<sequence>MTPTLTPPLQWQRRHVLSLQDFTVAELDIVLQTALSFQEVLNRRTKKVPTLQARVVANLFFESSTRTRNSFELAAKRLSADILNFSPGTSALNKGETILDTAKTLWAMGAEFMVIRHRQSGVPHTIAAEMDRLGGQVAVLNAGDGLHEHPSQALLDLFTLCQLYDPRQPRCALLQGKKIVIVGDIRHSRVARSNLYSLKTAGADVHLAGPPTLLPPEFADYGATLHWTLEPALADADIVMTLRLQRERMDQYLIPSLREYHQHFGMTHERLRLCRPDVRVLHPGPVNRGVELSSALLDDPQFSLVNQQVSSGVAVRMALLYLMGTYHGVKP</sequence>
<name>PYRB_THEVB</name>
<protein>
    <recommendedName>
        <fullName evidence="1">Aspartate carbamoyltransferase catalytic subunit</fullName>
        <ecNumber evidence="1">2.1.3.2</ecNumber>
    </recommendedName>
    <alternativeName>
        <fullName evidence="1">Aspartate transcarbamylase</fullName>
        <shortName evidence="1">ATCase</shortName>
    </alternativeName>
</protein>
<evidence type="ECO:0000255" key="1">
    <source>
        <dbReference type="HAMAP-Rule" id="MF_00001"/>
    </source>
</evidence>
<comment type="function">
    <text evidence="1">Catalyzes the condensation of carbamoyl phosphate and aspartate to form carbamoyl aspartate and inorganic phosphate, the committed step in the de novo pyrimidine nucleotide biosynthesis pathway.</text>
</comment>
<comment type="catalytic activity">
    <reaction evidence="1">
        <text>carbamoyl phosphate + L-aspartate = N-carbamoyl-L-aspartate + phosphate + H(+)</text>
        <dbReference type="Rhea" id="RHEA:20013"/>
        <dbReference type="ChEBI" id="CHEBI:15378"/>
        <dbReference type="ChEBI" id="CHEBI:29991"/>
        <dbReference type="ChEBI" id="CHEBI:32814"/>
        <dbReference type="ChEBI" id="CHEBI:43474"/>
        <dbReference type="ChEBI" id="CHEBI:58228"/>
        <dbReference type="EC" id="2.1.3.2"/>
    </reaction>
</comment>
<comment type="pathway">
    <text evidence="1">Pyrimidine metabolism; UMP biosynthesis via de novo pathway; (S)-dihydroorotate from bicarbonate: step 2/3.</text>
</comment>
<comment type="subunit">
    <text evidence="1">Heterododecamer (2C3:3R2) of six catalytic PyrB chains organized as two trimers (C3), and six regulatory PyrI chains organized as three dimers (R2).</text>
</comment>
<comment type="similarity">
    <text evidence="1">Belongs to the aspartate/ornithine carbamoyltransferase superfamily. ATCase family.</text>
</comment>
<gene>
    <name evidence="1" type="primary">pyrB</name>
    <name type="ordered locus">tll1558</name>
</gene>
<organism>
    <name type="scientific">Thermosynechococcus vestitus (strain NIES-2133 / IAM M-273 / BP-1)</name>
    <dbReference type="NCBI Taxonomy" id="197221"/>
    <lineage>
        <taxon>Bacteria</taxon>
        <taxon>Bacillati</taxon>
        <taxon>Cyanobacteriota</taxon>
        <taxon>Cyanophyceae</taxon>
        <taxon>Acaryochloridales</taxon>
        <taxon>Thermosynechococcaceae</taxon>
        <taxon>Thermosynechococcus</taxon>
    </lineage>
</organism>
<reference key="1">
    <citation type="journal article" date="2002" name="DNA Res.">
        <title>Complete genome structure of the thermophilic cyanobacterium Thermosynechococcus elongatus BP-1.</title>
        <authorList>
            <person name="Nakamura Y."/>
            <person name="Kaneko T."/>
            <person name="Sato S."/>
            <person name="Ikeuchi M."/>
            <person name="Katoh H."/>
            <person name="Sasamoto S."/>
            <person name="Watanabe A."/>
            <person name="Iriguchi M."/>
            <person name="Kawashima K."/>
            <person name="Kimura T."/>
            <person name="Kishida Y."/>
            <person name="Kiyokawa C."/>
            <person name="Kohara M."/>
            <person name="Matsumoto M."/>
            <person name="Matsuno A."/>
            <person name="Nakazaki N."/>
            <person name="Shimpo S."/>
            <person name="Sugimoto M."/>
            <person name="Takeuchi C."/>
            <person name="Yamada M."/>
            <person name="Tabata S."/>
        </authorList>
    </citation>
    <scope>NUCLEOTIDE SEQUENCE [LARGE SCALE GENOMIC DNA]</scope>
    <source>
        <strain>NIES-2133 / IAM M-273 / BP-1</strain>
    </source>
</reference>
<proteinExistence type="inferred from homology"/>